<feature type="chain" id="PRO_0000089549" description="Putative uncharacterized protein encoded by LINC00472">
    <location>
        <begin position="1"/>
        <end position="130"/>
    </location>
</feature>
<feature type="region of interest" description="Disordered" evidence="1">
    <location>
        <begin position="1"/>
        <end position="104"/>
    </location>
</feature>
<feature type="compositionally biased region" description="Low complexity" evidence="1">
    <location>
        <begin position="88"/>
        <end position="97"/>
    </location>
</feature>
<feature type="sequence conflict" description="In Ref. 1; BAB14488." evidence="2" ref="1">
    <original>A</original>
    <variation>S</variation>
    <location>
        <position position="73"/>
    </location>
</feature>
<evidence type="ECO:0000256" key="1">
    <source>
        <dbReference type="SAM" id="MobiDB-lite"/>
    </source>
</evidence>
<evidence type="ECO:0000305" key="2"/>
<comment type="caution">
    <text evidence="2">Product of a dubious CDS prediction. May be a non-coding RNA.</text>
</comment>
<keyword id="KW-1185">Reference proteome</keyword>
<gene>
    <name type="primary">LINC00472</name>
    <name type="synonym">C6orf155</name>
</gene>
<dbReference type="EMBL" id="AK023251">
    <property type="protein sequence ID" value="BAB14488.1"/>
    <property type="molecule type" value="mRNA"/>
</dbReference>
<dbReference type="EMBL" id="AL035467">
    <property type="status" value="NOT_ANNOTATED_CDS"/>
    <property type="molecule type" value="Genomic_DNA"/>
</dbReference>
<dbReference type="EMBL" id="CH471051">
    <property type="protein sequence ID" value="EAW48798.1"/>
    <property type="molecule type" value="Genomic_DNA"/>
</dbReference>
<dbReference type="EMBL" id="CH471051">
    <property type="protein sequence ID" value="EAW48799.1"/>
    <property type="molecule type" value="Genomic_DNA"/>
</dbReference>
<dbReference type="EMBL" id="CH471051">
    <property type="protein sequence ID" value="EAW48801.1"/>
    <property type="molecule type" value="Genomic_DNA"/>
</dbReference>
<dbReference type="GlyGen" id="Q9H8W2">
    <property type="glycosylation" value="2 sites, 1 O-linked glycan (2 sites)"/>
</dbReference>
<dbReference type="iPTMnet" id="Q9H8W2"/>
<dbReference type="PhosphoSitePlus" id="Q9H8W2"/>
<dbReference type="BioMuta" id="HGNC:21380"/>
<dbReference type="MassIVE" id="Q9H8W2"/>
<dbReference type="ProteomicsDB" id="81247"/>
<dbReference type="AGR" id="HGNC:21380"/>
<dbReference type="GeneCards" id="LINC00472"/>
<dbReference type="HGNC" id="HGNC:21380">
    <property type="gene designation" value="LINC00472"/>
</dbReference>
<dbReference type="neXtProt" id="NX_Q9H8W2"/>
<dbReference type="InParanoid" id="Q9H8W2"/>
<dbReference type="PAN-GO" id="Q9H8W2">
    <property type="GO annotations" value="0 GO annotations based on evolutionary models"/>
</dbReference>
<dbReference type="PathwayCommons" id="Q9H8W2"/>
<dbReference type="ChiTaRS" id="LINC00472">
    <property type="organism name" value="human"/>
</dbReference>
<dbReference type="Pharos" id="Q9H8W2">
    <property type="development level" value="Tdark"/>
</dbReference>
<dbReference type="Proteomes" id="UP000005640">
    <property type="component" value="Unplaced"/>
</dbReference>
<dbReference type="RNAct" id="Q9H8W2">
    <property type="molecule type" value="protein"/>
</dbReference>
<sequence>MRPGSSPRAPECGAPALPRPQLDRLPARPAPSRGRGAPSLRWPAKEVGPRPQIPATCEPGKVCGASAGRRDAARPSRPRSSRVTFSTRRQPGPQRGRWGLRGGPESVRGLPHLGLRISGTPLGIFSSWSL</sequence>
<name>CF155_HUMAN</name>
<proteinExistence type="uncertain"/>
<reference key="1">
    <citation type="journal article" date="2004" name="Nat. Genet.">
        <title>Complete sequencing and characterization of 21,243 full-length human cDNAs.</title>
        <authorList>
            <person name="Ota T."/>
            <person name="Suzuki Y."/>
            <person name="Nishikawa T."/>
            <person name="Otsuki T."/>
            <person name="Sugiyama T."/>
            <person name="Irie R."/>
            <person name="Wakamatsu A."/>
            <person name="Hayashi K."/>
            <person name="Sato H."/>
            <person name="Nagai K."/>
            <person name="Kimura K."/>
            <person name="Makita H."/>
            <person name="Sekine M."/>
            <person name="Obayashi M."/>
            <person name="Nishi T."/>
            <person name="Shibahara T."/>
            <person name="Tanaka T."/>
            <person name="Ishii S."/>
            <person name="Yamamoto J."/>
            <person name="Saito K."/>
            <person name="Kawai Y."/>
            <person name="Isono Y."/>
            <person name="Nakamura Y."/>
            <person name="Nagahari K."/>
            <person name="Murakami K."/>
            <person name="Yasuda T."/>
            <person name="Iwayanagi T."/>
            <person name="Wagatsuma M."/>
            <person name="Shiratori A."/>
            <person name="Sudo H."/>
            <person name="Hosoiri T."/>
            <person name="Kaku Y."/>
            <person name="Kodaira H."/>
            <person name="Kondo H."/>
            <person name="Sugawara M."/>
            <person name="Takahashi M."/>
            <person name="Kanda K."/>
            <person name="Yokoi T."/>
            <person name="Furuya T."/>
            <person name="Kikkawa E."/>
            <person name="Omura Y."/>
            <person name="Abe K."/>
            <person name="Kamihara K."/>
            <person name="Katsuta N."/>
            <person name="Sato K."/>
            <person name="Tanikawa M."/>
            <person name="Yamazaki M."/>
            <person name="Ninomiya K."/>
            <person name="Ishibashi T."/>
            <person name="Yamashita H."/>
            <person name="Murakawa K."/>
            <person name="Fujimori K."/>
            <person name="Tanai H."/>
            <person name="Kimata M."/>
            <person name="Watanabe M."/>
            <person name="Hiraoka S."/>
            <person name="Chiba Y."/>
            <person name="Ishida S."/>
            <person name="Ono Y."/>
            <person name="Takiguchi S."/>
            <person name="Watanabe S."/>
            <person name="Yosida M."/>
            <person name="Hotuta T."/>
            <person name="Kusano J."/>
            <person name="Kanehori K."/>
            <person name="Takahashi-Fujii A."/>
            <person name="Hara H."/>
            <person name="Tanase T.-O."/>
            <person name="Nomura Y."/>
            <person name="Togiya S."/>
            <person name="Komai F."/>
            <person name="Hara R."/>
            <person name="Takeuchi K."/>
            <person name="Arita M."/>
            <person name="Imose N."/>
            <person name="Musashino K."/>
            <person name="Yuuki H."/>
            <person name="Oshima A."/>
            <person name="Sasaki N."/>
            <person name="Aotsuka S."/>
            <person name="Yoshikawa Y."/>
            <person name="Matsunawa H."/>
            <person name="Ichihara T."/>
            <person name="Shiohata N."/>
            <person name="Sano S."/>
            <person name="Moriya S."/>
            <person name="Momiyama H."/>
            <person name="Satoh N."/>
            <person name="Takami S."/>
            <person name="Terashima Y."/>
            <person name="Suzuki O."/>
            <person name="Nakagawa S."/>
            <person name="Senoh A."/>
            <person name="Mizoguchi H."/>
            <person name="Goto Y."/>
            <person name="Shimizu F."/>
            <person name="Wakebe H."/>
            <person name="Hishigaki H."/>
            <person name="Watanabe T."/>
            <person name="Sugiyama A."/>
            <person name="Takemoto M."/>
            <person name="Kawakami B."/>
            <person name="Yamazaki M."/>
            <person name="Watanabe K."/>
            <person name="Kumagai A."/>
            <person name="Itakura S."/>
            <person name="Fukuzumi Y."/>
            <person name="Fujimori Y."/>
            <person name="Komiyama M."/>
            <person name="Tashiro H."/>
            <person name="Tanigami A."/>
            <person name="Fujiwara T."/>
            <person name="Ono T."/>
            <person name="Yamada K."/>
            <person name="Fujii Y."/>
            <person name="Ozaki K."/>
            <person name="Hirao M."/>
            <person name="Ohmori Y."/>
            <person name="Kawabata A."/>
            <person name="Hikiji T."/>
            <person name="Kobatake N."/>
            <person name="Inagaki H."/>
            <person name="Ikema Y."/>
            <person name="Okamoto S."/>
            <person name="Okitani R."/>
            <person name="Kawakami T."/>
            <person name="Noguchi S."/>
            <person name="Itoh T."/>
            <person name="Shigeta K."/>
            <person name="Senba T."/>
            <person name="Matsumura K."/>
            <person name="Nakajima Y."/>
            <person name="Mizuno T."/>
            <person name="Morinaga M."/>
            <person name="Sasaki M."/>
            <person name="Togashi T."/>
            <person name="Oyama M."/>
            <person name="Hata H."/>
            <person name="Watanabe M."/>
            <person name="Komatsu T."/>
            <person name="Mizushima-Sugano J."/>
            <person name="Satoh T."/>
            <person name="Shirai Y."/>
            <person name="Takahashi Y."/>
            <person name="Nakagawa K."/>
            <person name="Okumura K."/>
            <person name="Nagase T."/>
            <person name="Nomura N."/>
            <person name="Kikuchi H."/>
            <person name="Masuho Y."/>
            <person name="Yamashita R."/>
            <person name="Nakai K."/>
            <person name="Yada T."/>
            <person name="Nakamura Y."/>
            <person name="Ohara O."/>
            <person name="Isogai T."/>
            <person name="Sugano S."/>
        </authorList>
    </citation>
    <scope>NUCLEOTIDE SEQUENCE [LARGE SCALE MRNA]</scope>
</reference>
<reference key="2">
    <citation type="journal article" date="2003" name="Nature">
        <title>The DNA sequence and analysis of human chromosome 6.</title>
        <authorList>
            <person name="Mungall A.J."/>
            <person name="Palmer S.A."/>
            <person name="Sims S.K."/>
            <person name="Edwards C.A."/>
            <person name="Ashurst J.L."/>
            <person name="Wilming L."/>
            <person name="Jones M.C."/>
            <person name="Horton R."/>
            <person name="Hunt S.E."/>
            <person name="Scott C.E."/>
            <person name="Gilbert J.G.R."/>
            <person name="Clamp M.E."/>
            <person name="Bethel G."/>
            <person name="Milne S."/>
            <person name="Ainscough R."/>
            <person name="Almeida J.P."/>
            <person name="Ambrose K.D."/>
            <person name="Andrews T.D."/>
            <person name="Ashwell R.I.S."/>
            <person name="Babbage A.K."/>
            <person name="Bagguley C.L."/>
            <person name="Bailey J."/>
            <person name="Banerjee R."/>
            <person name="Barker D.J."/>
            <person name="Barlow K.F."/>
            <person name="Bates K."/>
            <person name="Beare D.M."/>
            <person name="Beasley H."/>
            <person name="Beasley O."/>
            <person name="Bird C.P."/>
            <person name="Blakey S.E."/>
            <person name="Bray-Allen S."/>
            <person name="Brook J."/>
            <person name="Brown A.J."/>
            <person name="Brown J.Y."/>
            <person name="Burford D.C."/>
            <person name="Burrill W."/>
            <person name="Burton J."/>
            <person name="Carder C."/>
            <person name="Carter N.P."/>
            <person name="Chapman J.C."/>
            <person name="Clark S.Y."/>
            <person name="Clark G."/>
            <person name="Clee C.M."/>
            <person name="Clegg S."/>
            <person name="Cobley V."/>
            <person name="Collier R.E."/>
            <person name="Collins J.E."/>
            <person name="Colman L.K."/>
            <person name="Corby N.R."/>
            <person name="Coville G.J."/>
            <person name="Culley K.M."/>
            <person name="Dhami P."/>
            <person name="Davies J."/>
            <person name="Dunn M."/>
            <person name="Earthrowl M.E."/>
            <person name="Ellington A.E."/>
            <person name="Evans K.A."/>
            <person name="Faulkner L."/>
            <person name="Francis M.D."/>
            <person name="Frankish A."/>
            <person name="Frankland J."/>
            <person name="French L."/>
            <person name="Garner P."/>
            <person name="Garnett J."/>
            <person name="Ghori M.J."/>
            <person name="Gilby L.M."/>
            <person name="Gillson C.J."/>
            <person name="Glithero R.J."/>
            <person name="Grafham D.V."/>
            <person name="Grant M."/>
            <person name="Gribble S."/>
            <person name="Griffiths C."/>
            <person name="Griffiths M.N.D."/>
            <person name="Hall R."/>
            <person name="Halls K.S."/>
            <person name="Hammond S."/>
            <person name="Harley J.L."/>
            <person name="Hart E.A."/>
            <person name="Heath P.D."/>
            <person name="Heathcott R."/>
            <person name="Holmes S.J."/>
            <person name="Howden P.J."/>
            <person name="Howe K.L."/>
            <person name="Howell G.R."/>
            <person name="Huckle E."/>
            <person name="Humphray S.J."/>
            <person name="Humphries M.D."/>
            <person name="Hunt A.R."/>
            <person name="Johnson C.M."/>
            <person name="Joy A.A."/>
            <person name="Kay M."/>
            <person name="Keenan S.J."/>
            <person name="Kimberley A.M."/>
            <person name="King A."/>
            <person name="Laird G.K."/>
            <person name="Langford C."/>
            <person name="Lawlor S."/>
            <person name="Leongamornlert D.A."/>
            <person name="Leversha M."/>
            <person name="Lloyd C.R."/>
            <person name="Lloyd D.M."/>
            <person name="Loveland J.E."/>
            <person name="Lovell J."/>
            <person name="Martin S."/>
            <person name="Mashreghi-Mohammadi M."/>
            <person name="Maslen G.L."/>
            <person name="Matthews L."/>
            <person name="McCann O.T."/>
            <person name="McLaren S.J."/>
            <person name="McLay K."/>
            <person name="McMurray A."/>
            <person name="Moore M.J.F."/>
            <person name="Mullikin J.C."/>
            <person name="Niblett D."/>
            <person name="Nickerson T."/>
            <person name="Novik K.L."/>
            <person name="Oliver K."/>
            <person name="Overton-Larty E.K."/>
            <person name="Parker A."/>
            <person name="Patel R."/>
            <person name="Pearce A.V."/>
            <person name="Peck A.I."/>
            <person name="Phillimore B.J.C.T."/>
            <person name="Phillips S."/>
            <person name="Plumb R.W."/>
            <person name="Porter K.M."/>
            <person name="Ramsey Y."/>
            <person name="Ranby S.A."/>
            <person name="Rice C.M."/>
            <person name="Ross M.T."/>
            <person name="Searle S.M."/>
            <person name="Sehra H.K."/>
            <person name="Sheridan E."/>
            <person name="Skuce C.D."/>
            <person name="Smith S."/>
            <person name="Smith M."/>
            <person name="Spraggon L."/>
            <person name="Squares S.L."/>
            <person name="Steward C.A."/>
            <person name="Sycamore N."/>
            <person name="Tamlyn-Hall G."/>
            <person name="Tester J."/>
            <person name="Theaker A.J."/>
            <person name="Thomas D.W."/>
            <person name="Thorpe A."/>
            <person name="Tracey A."/>
            <person name="Tromans A."/>
            <person name="Tubby B."/>
            <person name="Wall M."/>
            <person name="Wallis J.M."/>
            <person name="West A.P."/>
            <person name="White S.S."/>
            <person name="Whitehead S.L."/>
            <person name="Whittaker H."/>
            <person name="Wild A."/>
            <person name="Willey D.J."/>
            <person name="Wilmer T.E."/>
            <person name="Wood J.M."/>
            <person name="Wray P.W."/>
            <person name="Wyatt J.C."/>
            <person name="Young L."/>
            <person name="Younger R.M."/>
            <person name="Bentley D.R."/>
            <person name="Coulson A."/>
            <person name="Durbin R.M."/>
            <person name="Hubbard T."/>
            <person name="Sulston J.E."/>
            <person name="Dunham I."/>
            <person name="Rogers J."/>
            <person name="Beck S."/>
        </authorList>
    </citation>
    <scope>NUCLEOTIDE SEQUENCE [LARGE SCALE GENOMIC DNA]</scope>
</reference>
<reference key="3">
    <citation type="submission" date="2005-09" db="EMBL/GenBank/DDBJ databases">
        <authorList>
            <person name="Mural R.J."/>
            <person name="Istrail S."/>
            <person name="Sutton G.G."/>
            <person name="Florea L."/>
            <person name="Halpern A.L."/>
            <person name="Mobarry C.M."/>
            <person name="Lippert R."/>
            <person name="Walenz B."/>
            <person name="Shatkay H."/>
            <person name="Dew I."/>
            <person name="Miller J.R."/>
            <person name="Flanigan M.J."/>
            <person name="Edwards N.J."/>
            <person name="Bolanos R."/>
            <person name="Fasulo D."/>
            <person name="Halldorsson B.V."/>
            <person name="Hannenhalli S."/>
            <person name="Turner R."/>
            <person name="Yooseph S."/>
            <person name="Lu F."/>
            <person name="Nusskern D.R."/>
            <person name="Shue B.C."/>
            <person name="Zheng X.H."/>
            <person name="Zhong F."/>
            <person name="Delcher A.L."/>
            <person name="Huson D.H."/>
            <person name="Kravitz S.A."/>
            <person name="Mouchard L."/>
            <person name="Reinert K."/>
            <person name="Remington K.A."/>
            <person name="Clark A.G."/>
            <person name="Waterman M.S."/>
            <person name="Eichler E.E."/>
            <person name="Adams M.D."/>
            <person name="Hunkapiller M.W."/>
            <person name="Myers E.W."/>
            <person name="Venter J.C."/>
        </authorList>
    </citation>
    <scope>NUCLEOTIDE SEQUENCE [LARGE SCALE GENOMIC DNA]</scope>
</reference>
<organism>
    <name type="scientific">Homo sapiens</name>
    <name type="common">Human</name>
    <dbReference type="NCBI Taxonomy" id="9606"/>
    <lineage>
        <taxon>Eukaryota</taxon>
        <taxon>Metazoa</taxon>
        <taxon>Chordata</taxon>
        <taxon>Craniata</taxon>
        <taxon>Vertebrata</taxon>
        <taxon>Euteleostomi</taxon>
        <taxon>Mammalia</taxon>
        <taxon>Eutheria</taxon>
        <taxon>Euarchontoglires</taxon>
        <taxon>Primates</taxon>
        <taxon>Haplorrhini</taxon>
        <taxon>Catarrhini</taxon>
        <taxon>Hominidae</taxon>
        <taxon>Homo</taxon>
    </lineage>
</organism>
<accession>Q9H8W2</accession>
<accession>E1P533</accession>
<accession>Q5TG13</accession>
<protein>
    <recommendedName>
        <fullName>Putative uncharacterized protein encoded by LINC00472</fullName>
    </recommendedName>
</protein>